<protein>
    <recommendedName>
        <fullName evidence="1">Alanine--tRNA ligase</fullName>
        <ecNumber evidence="1">6.1.1.7</ecNumber>
    </recommendedName>
    <alternativeName>
        <fullName evidence="1">Alanyl-tRNA synthetase</fullName>
        <shortName evidence="1">AlaRS</shortName>
    </alternativeName>
</protein>
<gene>
    <name evidence="1" type="primary">alaS</name>
    <name type="ordered locus">Teth39_1052</name>
</gene>
<feature type="chain" id="PRO_0000347847" description="Alanine--tRNA ligase">
    <location>
        <begin position="1"/>
        <end position="877"/>
    </location>
</feature>
<feature type="binding site" evidence="1">
    <location>
        <position position="563"/>
    </location>
    <ligand>
        <name>Zn(2+)</name>
        <dbReference type="ChEBI" id="CHEBI:29105"/>
    </ligand>
</feature>
<feature type="binding site" evidence="1">
    <location>
        <position position="567"/>
    </location>
    <ligand>
        <name>Zn(2+)</name>
        <dbReference type="ChEBI" id="CHEBI:29105"/>
    </ligand>
</feature>
<feature type="binding site" evidence="1">
    <location>
        <position position="665"/>
    </location>
    <ligand>
        <name>Zn(2+)</name>
        <dbReference type="ChEBI" id="CHEBI:29105"/>
    </ligand>
</feature>
<feature type="binding site" evidence="1">
    <location>
        <position position="669"/>
    </location>
    <ligand>
        <name>Zn(2+)</name>
        <dbReference type="ChEBI" id="CHEBI:29105"/>
    </ligand>
</feature>
<sequence length="877" mass="98606">MEKLGMNEIREKFLSFFESKGHLRLPSFSLIPKNDKSLLLINSGMAPLKPYFTGKETPPSKRVTTCQRCIRTPDIERVGKTARHGTFFEMLGNFSFGDYFKKEAIPWAWEFVTEVLGLPVNRLWVSIYEEDDEAFEIWNKIVGLPPERIVRMGKEDNFWEIGTGPCGPSSEIYFDRGEEKGCGKPTCGVGCDCDRFIEFWNLVFTQFNKDEQGNYHRLPNPNIDTGMGLERIATIMQGVDSIFDVDVIRGITNFVSQIAEVEYGKDAEKDVSLRVITDHIRGITFMISDGILPSNEGRGYVLRRLLRRAARHGKLLGINDTFLYRVVDSVVENYGEAYPEIIDRKDYIKRIVKLEEERFKETIDQGLTILQDYINELKVQGKTVLEGSKAFKLYDTYGFPLDLTKEILQEAGITVDEEGYTKELEKQRIRARSSRKEDNSLWEQDIYSTLGDIKTKFVGYDTYESNSKVLAIVKDEELVEEAEAGDDVSIILDVTPFYAESGGQIGDNGILENENVLIKVKDCKKVGDRFIHIGTIERGLISVRDEVKAQIDVVSRRNAARNHTATHLLHKALKEILGDHVHQAGSLVADDRLRFDFSHYQAVTKEELKQIENRVNEKIYQSLNVHIEEKTYDEAVKEGAVALFTEKYGDKVRVVKIDDYSMELCGGTHVKNTNEIGIFKIVSESAVGAGLRRIEALTGLAAIKYLEEKEEILKEASDLLKAQDKEIVSKIESLQQVLKTKDKEIEQLKIKMASILANSLINSAISLDGIKVVVSKVEDYDSEALKALGDILKDKLKTAAIVLASSTPEKAIFVGMATKDVVQKGINMGAVIKEVCKVSEGNGGGRPDMAQGTGKNPSKVEEALNKAIDIVKEQLKN</sequence>
<proteinExistence type="inferred from homology"/>
<organism>
    <name type="scientific">Thermoanaerobacter pseudethanolicus (strain ATCC 33223 / 39E)</name>
    <name type="common">Clostridium thermohydrosulfuricum</name>
    <dbReference type="NCBI Taxonomy" id="340099"/>
    <lineage>
        <taxon>Bacteria</taxon>
        <taxon>Bacillati</taxon>
        <taxon>Bacillota</taxon>
        <taxon>Clostridia</taxon>
        <taxon>Thermoanaerobacterales</taxon>
        <taxon>Thermoanaerobacteraceae</taxon>
        <taxon>Thermoanaerobacter</taxon>
    </lineage>
</organism>
<reference key="1">
    <citation type="submission" date="2008-01" db="EMBL/GenBank/DDBJ databases">
        <title>Complete sequence of Thermoanaerobacter pseudethanolicus 39E.</title>
        <authorList>
            <person name="Copeland A."/>
            <person name="Lucas S."/>
            <person name="Lapidus A."/>
            <person name="Barry K."/>
            <person name="Glavina del Rio T."/>
            <person name="Dalin E."/>
            <person name="Tice H."/>
            <person name="Pitluck S."/>
            <person name="Bruce D."/>
            <person name="Goodwin L."/>
            <person name="Saunders E."/>
            <person name="Brettin T."/>
            <person name="Detter J.C."/>
            <person name="Han C."/>
            <person name="Schmutz J."/>
            <person name="Larimer F."/>
            <person name="Land M."/>
            <person name="Hauser L."/>
            <person name="Kyrpides N."/>
            <person name="Lykidis A."/>
            <person name="Hemme C."/>
            <person name="Fields M.W."/>
            <person name="He Z."/>
            <person name="Zhou J."/>
            <person name="Richardson P."/>
        </authorList>
    </citation>
    <scope>NUCLEOTIDE SEQUENCE [LARGE SCALE GENOMIC DNA]</scope>
    <source>
        <strain>ATCC 33223 / DSM 2355 / 39E</strain>
    </source>
</reference>
<name>SYA_THEP3</name>
<accession>B0K994</accession>
<keyword id="KW-0030">Aminoacyl-tRNA synthetase</keyword>
<keyword id="KW-0067">ATP-binding</keyword>
<keyword id="KW-0963">Cytoplasm</keyword>
<keyword id="KW-0436">Ligase</keyword>
<keyword id="KW-0479">Metal-binding</keyword>
<keyword id="KW-0547">Nucleotide-binding</keyword>
<keyword id="KW-0648">Protein biosynthesis</keyword>
<keyword id="KW-1185">Reference proteome</keyword>
<keyword id="KW-0694">RNA-binding</keyword>
<keyword id="KW-0820">tRNA-binding</keyword>
<keyword id="KW-0862">Zinc</keyword>
<comment type="function">
    <text evidence="1">Catalyzes the attachment of alanine to tRNA(Ala) in a two-step reaction: alanine is first activated by ATP to form Ala-AMP and then transferred to the acceptor end of tRNA(Ala). Also edits incorrectly charged Ser-tRNA(Ala) and Gly-tRNA(Ala) via its editing domain.</text>
</comment>
<comment type="catalytic activity">
    <reaction evidence="1">
        <text>tRNA(Ala) + L-alanine + ATP = L-alanyl-tRNA(Ala) + AMP + diphosphate</text>
        <dbReference type="Rhea" id="RHEA:12540"/>
        <dbReference type="Rhea" id="RHEA-COMP:9657"/>
        <dbReference type="Rhea" id="RHEA-COMP:9923"/>
        <dbReference type="ChEBI" id="CHEBI:30616"/>
        <dbReference type="ChEBI" id="CHEBI:33019"/>
        <dbReference type="ChEBI" id="CHEBI:57972"/>
        <dbReference type="ChEBI" id="CHEBI:78442"/>
        <dbReference type="ChEBI" id="CHEBI:78497"/>
        <dbReference type="ChEBI" id="CHEBI:456215"/>
        <dbReference type="EC" id="6.1.1.7"/>
    </reaction>
</comment>
<comment type="cofactor">
    <cofactor evidence="1">
        <name>Zn(2+)</name>
        <dbReference type="ChEBI" id="CHEBI:29105"/>
    </cofactor>
    <text evidence="1">Binds 1 zinc ion per subunit.</text>
</comment>
<comment type="subcellular location">
    <subcellularLocation>
        <location evidence="1">Cytoplasm</location>
    </subcellularLocation>
</comment>
<comment type="domain">
    <text evidence="1">Consists of three domains; the N-terminal catalytic domain, the editing domain and the C-terminal C-Ala domain. The editing domain removes incorrectly charged amino acids, while the C-Ala domain, along with tRNA(Ala), serves as a bridge to cooperatively bring together the editing and aminoacylation centers thus stimulating deacylation of misacylated tRNAs.</text>
</comment>
<comment type="similarity">
    <text evidence="1">Belongs to the class-II aminoacyl-tRNA synthetase family.</text>
</comment>
<dbReference type="EC" id="6.1.1.7" evidence="1"/>
<dbReference type="EMBL" id="CP000924">
    <property type="protein sequence ID" value="ABY94707.1"/>
    <property type="molecule type" value="Genomic_DNA"/>
</dbReference>
<dbReference type="RefSeq" id="WP_009052311.1">
    <property type="nucleotide sequence ID" value="NC_010321.1"/>
</dbReference>
<dbReference type="SMR" id="B0K994"/>
<dbReference type="STRING" id="340099.Teth39_1052"/>
<dbReference type="KEGG" id="tpd:Teth39_1052"/>
<dbReference type="eggNOG" id="COG0013">
    <property type="taxonomic scope" value="Bacteria"/>
</dbReference>
<dbReference type="HOGENOM" id="CLU_004485_1_1_9"/>
<dbReference type="Proteomes" id="UP000002156">
    <property type="component" value="Chromosome"/>
</dbReference>
<dbReference type="GO" id="GO:0005829">
    <property type="term" value="C:cytosol"/>
    <property type="evidence" value="ECO:0007669"/>
    <property type="project" value="TreeGrafter"/>
</dbReference>
<dbReference type="GO" id="GO:0004813">
    <property type="term" value="F:alanine-tRNA ligase activity"/>
    <property type="evidence" value="ECO:0007669"/>
    <property type="project" value="UniProtKB-UniRule"/>
</dbReference>
<dbReference type="GO" id="GO:0002161">
    <property type="term" value="F:aminoacyl-tRNA deacylase activity"/>
    <property type="evidence" value="ECO:0007669"/>
    <property type="project" value="TreeGrafter"/>
</dbReference>
<dbReference type="GO" id="GO:0005524">
    <property type="term" value="F:ATP binding"/>
    <property type="evidence" value="ECO:0007669"/>
    <property type="project" value="UniProtKB-UniRule"/>
</dbReference>
<dbReference type="GO" id="GO:0140096">
    <property type="term" value="F:catalytic activity, acting on a protein"/>
    <property type="evidence" value="ECO:0007669"/>
    <property type="project" value="UniProtKB-ARBA"/>
</dbReference>
<dbReference type="GO" id="GO:0016740">
    <property type="term" value="F:transferase activity"/>
    <property type="evidence" value="ECO:0007669"/>
    <property type="project" value="UniProtKB-ARBA"/>
</dbReference>
<dbReference type="GO" id="GO:0000049">
    <property type="term" value="F:tRNA binding"/>
    <property type="evidence" value="ECO:0007669"/>
    <property type="project" value="UniProtKB-KW"/>
</dbReference>
<dbReference type="GO" id="GO:0008270">
    <property type="term" value="F:zinc ion binding"/>
    <property type="evidence" value="ECO:0007669"/>
    <property type="project" value="UniProtKB-UniRule"/>
</dbReference>
<dbReference type="GO" id="GO:0006419">
    <property type="term" value="P:alanyl-tRNA aminoacylation"/>
    <property type="evidence" value="ECO:0007669"/>
    <property type="project" value="UniProtKB-UniRule"/>
</dbReference>
<dbReference type="CDD" id="cd00673">
    <property type="entry name" value="AlaRS_core"/>
    <property type="match status" value="1"/>
</dbReference>
<dbReference type="FunFam" id="2.40.30.130:FF:000001">
    <property type="entry name" value="Alanine--tRNA ligase"/>
    <property type="match status" value="1"/>
</dbReference>
<dbReference type="FunFam" id="3.10.310.40:FF:000001">
    <property type="entry name" value="Alanine--tRNA ligase"/>
    <property type="match status" value="1"/>
</dbReference>
<dbReference type="FunFam" id="3.30.54.20:FF:000001">
    <property type="entry name" value="Alanine--tRNA ligase"/>
    <property type="match status" value="1"/>
</dbReference>
<dbReference type="FunFam" id="3.30.930.10:FF:000004">
    <property type="entry name" value="Alanine--tRNA ligase"/>
    <property type="match status" value="1"/>
</dbReference>
<dbReference type="FunFam" id="3.30.980.10:FF:000004">
    <property type="entry name" value="Alanine--tRNA ligase, cytoplasmic"/>
    <property type="match status" value="1"/>
</dbReference>
<dbReference type="Gene3D" id="2.40.30.130">
    <property type="match status" value="1"/>
</dbReference>
<dbReference type="Gene3D" id="3.10.310.40">
    <property type="match status" value="1"/>
</dbReference>
<dbReference type="Gene3D" id="3.30.54.20">
    <property type="match status" value="1"/>
</dbReference>
<dbReference type="Gene3D" id="6.10.250.550">
    <property type="match status" value="1"/>
</dbReference>
<dbReference type="Gene3D" id="3.30.930.10">
    <property type="entry name" value="Bira Bifunctional Protein, Domain 2"/>
    <property type="match status" value="1"/>
</dbReference>
<dbReference type="Gene3D" id="3.30.980.10">
    <property type="entry name" value="Threonyl-trna Synthetase, Chain A, domain 2"/>
    <property type="match status" value="1"/>
</dbReference>
<dbReference type="HAMAP" id="MF_00036_B">
    <property type="entry name" value="Ala_tRNA_synth_B"/>
    <property type="match status" value="1"/>
</dbReference>
<dbReference type="InterPro" id="IPR045864">
    <property type="entry name" value="aa-tRNA-synth_II/BPL/LPL"/>
</dbReference>
<dbReference type="InterPro" id="IPR002318">
    <property type="entry name" value="Ala-tRNA-lgiase_IIc"/>
</dbReference>
<dbReference type="InterPro" id="IPR018162">
    <property type="entry name" value="Ala-tRNA-ligase_IIc_anticod-bd"/>
</dbReference>
<dbReference type="InterPro" id="IPR018165">
    <property type="entry name" value="Ala-tRNA-synth_IIc_core"/>
</dbReference>
<dbReference type="InterPro" id="IPR018164">
    <property type="entry name" value="Ala-tRNA-synth_IIc_N"/>
</dbReference>
<dbReference type="InterPro" id="IPR050058">
    <property type="entry name" value="Ala-tRNA_ligase"/>
</dbReference>
<dbReference type="InterPro" id="IPR023033">
    <property type="entry name" value="Ala_tRNA_ligase_euk/bac"/>
</dbReference>
<dbReference type="InterPro" id="IPR003156">
    <property type="entry name" value="DHHA1_dom"/>
</dbReference>
<dbReference type="InterPro" id="IPR018163">
    <property type="entry name" value="Thr/Ala-tRNA-synth_IIc_edit"/>
</dbReference>
<dbReference type="InterPro" id="IPR009000">
    <property type="entry name" value="Transl_B-barrel_sf"/>
</dbReference>
<dbReference type="InterPro" id="IPR012947">
    <property type="entry name" value="tRNA_SAD"/>
</dbReference>
<dbReference type="NCBIfam" id="TIGR00344">
    <property type="entry name" value="alaS"/>
    <property type="match status" value="1"/>
</dbReference>
<dbReference type="PANTHER" id="PTHR11777:SF9">
    <property type="entry name" value="ALANINE--TRNA LIGASE, CYTOPLASMIC"/>
    <property type="match status" value="1"/>
</dbReference>
<dbReference type="PANTHER" id="PTHR11777">
    <property type="entry name" value="ALANYL-TRNA SYNTHETASE"/>
    <property type="match status" value="1"/>
</dbReference>
<dbReference type="Pfam" id="PF02272">
    <property type="entry name" value="DHHA1"/>
    <property type="match status" value="1"/>
</dbReference>
<dbReference type="Pfam" id="PF01411">
    <property type="entry name" value="tRNA-synt_2c"/>
    <property type="match status" value="1"/>
</dbReference>
<dbReference type="Pfam" id="PF07973">
    <property type="entry name" value="tRNA_SAD"/>
    <property type="match status" value="1"/>
</dbReference>
<dbReference type="PRINTS" id="PR00980">
    <property type="entry name" value="TRNASYNTHALA"/>
</dbReference>
<dbReference type="SMART" id="SM00863">
    <property type="entry name" value="tRNA_SAD"/>
    <property type="match status" value="1"/>
</dbReference>
<dbReference type="SUPFAM" id="SSF55681">
    <property type="entry name" value="Class II aaRS and biotin synthetases"/>
    <property type="match status" value="1"/>
</dbReference>
<dbReference type="SUPFAM" id="SSF101353">
    <property type="entry name" value="Putative anticodon-binding domain of alanyl-tRNA synthetase (AlaRS)"/>
    <property type="match status" value="1"/>
</dbReference>
<dbReference type="SUPFAM" id="SSF55186">
    <property type="entry name" value="ThrRS/AlaRS common domain"/>
    <property type="match status" value="1"/>
</dbReference>
<dbReference type="SUPFAM" id="SSF50447">
    <property type="entry name" value="Translation proteins"/>
    <property type="match status" value="1"/>
</dbReference>
<dbReference type="PROSITE" id="PS50860">
    <property type="entry name" value="AA_TRNA_LIGASE_II_ALA"/>
    <property type="match status" value="1"/>
</dbReference>
<evidence type="ECO:0000255" key="1">
    <source>
        <dbReference type="HAMAP-Rule" id="MF_00036"/>
    </source>
</evidence>